<feature type="chain" id="PRO_0000211896" description="Transposase InsI for insertion sequence element IS30A">
    <location>
        <begin position="1"/>
        <end position="383"/>
    </location>
</feature>
<feature type="domain" description="Integrase catalytic" evidence="1">
    <location>
        <begin position="213"/>
        <end position="379"/>
    </location>
</feature>
<protein>
    <recommendedName>
        <fullName>Transposase InsI for insertion sequence element IS30A</fullName>
    </recommendedName>
</protein>
<comment type="function">
    <text evidence="2">Required for the transposition of the insertion element.</text>
</comment>
<comment type="similarity">
    <text evidence="2">Belongs to the transposase IS30 family.</text>
</comment>
<gene>
    <name type="primary">insI1</name>
    <name type="ordered locus">b0256</name>
    <name type="ordered locus">JW0246</name>
</gene>
<proteinExistence type="inferred from homology"/>
<accession>P0CF88</accession>
<accession>P37246</accession>
<accession>P77341</accession>
<accession>Q2M630</accession>
<accession>Q2MCF8</accession>
<organism>
    <name type="scientific">Escherichia coli (strain K12)</name>
    <dbReference type="NCBI Taxonomy" id="83333"/>
    <lineage>
        <taxon>Bacteria</taxon>
        <taxon>Pseudomonadati</taxon>
        <taxon>Pseudomonadota</taxon>
        <taxon>Gammaproteobacteria</taxon>
        <taxon>Enterobacterales</taxon>
        <taxon>Enterobacteriaceae</taxon>
        <taxon>Escherichia</taxon>
    </lineage>
</organism>
<name>INSI1_ECOLI</name>
<keyword id="KW-0233">DNA recombination</keyword>
<keyword id="KW-0238">DNA-binding</keyword>
<keyword id="KW-1185">Reference proteome</keyword>
<keyword id="KW-0814">Transposable element</keyword>
<keyword id="KW-0815">Transposition</keyword>
<sequence>MRRTFTAEEKASVFELWKNGTGFSEIANILGSKPGTIFTMLRDTGGIKPHERKRAVAHLTLSEREEIRAGLSAKMSIRAIATALNRSPSTISREVQRNRGRRYYKAVDANNRANRMAKRPKPCLLDQNLPLRKLVLEKLEMKWSPEQISGWLRRTKPRQKTLRISPETIYKTLYFRSREALHHLNIQHLRRSHSLRHGRRHTRKGERGTINIVNGTPIHERSRNIDNRRSLGHWEGDLVSGTKNSHIATLVDRKSRYTIIVRLRGKDSVSVNQALTDKFLSLPSELRKSLTWDRGMELARHLEFTVSTGVKVYFCDPQSPWQRGTNENTNGLIRQYFPKKTCLAQYTQHELDLVAAQLNNRPRKTLKFKTPKEIIERGVALTD</sequence>
<reference key="1">
    <citation type="submission" date="1996-02" db="EMBL/GenBank/DDBJ databases">
        <title>Systematic sequencing of the Escherichia coli genome: analysis of the 4.0 - 6.0 min (189,987 - 281,416bp) region.</title>
        <authorList>
            <person name="Takemoto K."/>
            <person name="Mori H."/>
            <person name="Murayama N."/>
            <person name="Kataoka K."/>
            <person name="Yano M."/>
            <person name="Itoh T."/>
            <person name="Yamamoto Y."/>
            <person name="Inokuchi H."/>
            <person name="Miki T."/>
            <person name="Hatada E."/>
            <person name="Fukuda R."/>
            <person name="Ichihara S."/>
            <person name="Mizuno T."/>
            <person name="Makino K."/>
            <person name="Nakata A."/>
            <person name="Yura T."/>
            <person name="Sampei G."/>
            <person name="Mizobuchi K."/>
        </authorList>
    </citation>
    <scope>NUCLEOTIDE SEQUENCE [LARGE SCALE GENOMIC DNA]</scope>
    <source>
        <strain>K12 / W3110 / ATCC 27325 / DSM 5911</strain>
    </source>
</reference>
<reference key="2">
    <citation type="submission" date="1997-01" db="EMBL/GenBank/DDBJ databases">
        <title>Sequence of minutes 4-25 of Escherichia coli.</title>
        <authorList>
            <person name="Chung E."/>
            <person name="Allen E."/>
            <person name="Araujo R."/>
            <person name="Aparicio A.M."/>
            <person name="Davis K."/>
            <person name="Duncan M."/>
            <person name="Federspiel N."/>
            <person name="Hyman R."/>
            <person name="Kalman S."/>
            <person name="Komp C."/>
            <person name="Kurdi O."/>
            <person name="Lew H."/>
            <person name="Lin D."/>
            <person name="Namath A."/>
            <person name="Oefner P."/>
            <person name="Roberts D."/>
            <person name="Schramm S."/>
            <person name="Davis R.W."/>
        </authorList>
    </citation>
    <scope>NUCLEOTIDE SEQUENCE [LARGE SCALE GENOMIC DNA]</scope>
    <source>
        <strain>K12 / MG1655 / ATCC 47076</strain>
    </source>
</reference>
<reference key="3">
    <citation type="journal article" date="1997" name="Science">
        <title>The complete genome sequence of Escherichia coli K-12.</title>
        <authorList>
            <person name="Blattner F.R."/>
            <person name="Plunkett G. III"/>
            <person name="Bloch C.A."/>
            <person name="Perna N.T."/>
            <person name="Burland V."/>
            <person name="Riley M."/>
            <person name="Collado-Vides J."/>
            <person name="Glasner J.D."/>
            <person name="Rode C.K."/>
            <person name="Mayhew G.F."/>
            <person name="Gregor J."/>
            <person name="Davis N.W."/>
            <person name="Kirkpatrick H.A."/>
            <person name="Goeden M.A."/>
            <person name="Rose D.J."/>
            <person name="Mau B."/>
            <person name="Shao Y."/>
        </authorList>
    </citation>
    <scope>NUCLEOTIDE SEQUENCE [LARGE SCALE GENOMIC DNA]</scope>
    <source>
        <strain>K12 / MG1655 / ATCC 47076</strain>
    </source>
</reference>
<reference key="4">
    <citation type="journal article" date="2006" name="Mol. Syst. Biol.">
        <title>Highly accurate genome sequences of Escherichia coli K-12 strains MG1655 and W3110.</title>
        <authorList>
            <person name="Hayashi K."/>
            <person name="Morooka N."/>
            <person name="Yamamoto Y."/>
            <person name="Fujita K."/>
            <person name="Isono K."/>
            <person name="Choi S."/>
            <person name="Ohtsubo E."/>
            <person name="Baba T."/>
            <person name="Wanner B.L."/>
            <person name="Mori H."/>
            <person name="Horiuchi T."/>
        </authorList>
    </citation>
    <scope>NUCLEOTIDE SEQUENCE [LARGE SCALE GENOMIC DNA]</scope>
    <source>
        <strain>K12 / W3110 / ATCC 27325 / DSM 5911</strain>
    </source>
</reference>
<dbReference type="EMBL" id="U70214">
    <property type="protein sequence ID" value="AAB08675.1"/>
    <property type="molecule type" value="Genomic_DNA"/>
</dbReference>
<dbReference type="EMBL" id="U00096">
    <property type="protein sequence ID" value="AAC73359.1"/>
    <property type="molecule type" value="Genomic_DNA"/>
</dbReference>
<dbReference type="EMBL" id="AP009048">
    <property type="protein sequence ID" value="BAE76048.1"/>
    <property type="molecule type" value="Genomic_DNA"/>
</dbReference>
<dbReference type="RefSeq" id="NP_414790.1">
    <property type="nucleotide sequence ID" value="NC_000913.3"/>
</dbReference>
<dbReference type="RefSeq" id="WP_001254938.1">
    <property type="nucleotide sequence ID" value="NZ_CP009789.1"/>
</dbReference>
<dbReference type="BioGRID" id="4262796">
    <property type="interactions" value="2"/>
</dbReference>
<dbReference type="FunCoup" id="P0CF88">
    <property type="interactions" value="2"/>
</dbReference>
<dbReference type="STRING" id="511145.b0256"/>
<dbReference type="PaxDb" id="511145-b0256"/>
<dbReference type="EnsemblBacteria" id="AAC73359">
    <property type="protein sequence ID" value="AAC73359"/>
    <property type="gene ID" value="b0256"/>
</dbReference>
<dbReference type="GeneID" id="949005"/>
<dbReference type="KEGG" id="ecj:JW0246"/>
<dbReference type="KEGG" id="eco:b0256"/>
<dbReference type="KEGG" id="ecoc:C3026_01225"/>
<dbReference type="KEGG" id="ecoc:C3026_08185"/>
<dbReference type="KEGG" id="ecoc:C3026_21990"/>
<dbReference type="KEGG" id="ecoc:C3026_23960"/>
<dbReference type="PATRIC" id="fig|511145.12.peg.259"/>
<dbReference type="EchoBASE" id="EB4703"/>
<dbReference type="eggNOG" id="COG2826">
    <property type="taxonomic scope" value="Bacteria"/>
</dbReference>
<dbReference type="HOGENOM" id="CLU_035706_0_0_6"/>
<dbReference type="InParanoid" id="P0CF88"/>
<dbReference type="OMA" id="EFSEWPY"/>
<dbReference type="OrthoDB" id="9803231at2"/>
<dbReference type="PhylomeDB" id="P0CF88"/>
<dbReference type="BioCyc" id="EcoCyc:G6131-MONOMER"/>
<dbReference type="BioCyc" id="MetaCyc:G6131-MONOMER"/>
<dbReference type="PRO" id="PR:P0CF88"/>
<dbReference type="Proteomes" id="UP000000625">
    <property type="component" value="Chromosome"/>
</dbReference>
<dbReference type="GO" id="GO:0032993">
    <property type="term" value="C:protein-DNA complex"/>
    <property type="evidence" value="ECO:0000314"/>
    <property type="project" value="EcoCyc"/>
</dbReference>
<dbReference type="GO" id="GO:0032135">
    <property type="term" value="F:DNA insertion or deletion binding"/>
    <property type="evidence" value="ECO:0000314"/>
    <property type="project" value="EcoCyc"/>
</dbReference>
<dbReference type="GO" id="GO:0043565">
    <property type="term" value="F:sequence-specific DNA binding"/>
    <property type="evidence" value="ECO:0000314"/>
    <property type="project" value="EcoCyc"/>
</dbReference>
<dbReference type="GO" id="GO:0004803">
    <property type="term" value="F:transposase activity"/>
    <property type="evidence" value="ECO:0000318"/>
    <property type="project" value="GO_Central"/>
</dbReference>
<dbReference type="GO" id="GO:0015074">
    <property type="term" value="P:DNA integration"/>
    <property type="evidence" value="ECO:0007669"/>
    <property type="project" value="InterPro"/>
</dbReference>
<dbReference type="GO" id="GO:0006313">
    <property type="term" value="P:DNA transposition"/>
    <property type="evidence" value="ECO:0000314"/>
    <property type="project" value="EcoCyc"/>
</dbReference>
<dbReference type="GO" id="GO:0032196">
    <property type="term" value="P:transposition"/>
    <property type="evidence" value="ECO:0000318"/>
    <property type="project" value="GO_Central"/>
</dbReference>
<dbReference type="FunFam" id="3.30.420.10:FF:000038">
    <property type="entry name" value="IS30-like element IS30 family transposase"/>
    <property type="match status" value="1"/>
</dbReference>
<dbReference type="Gene3D" id="1.10.10.60">
    <property type="entry name" value="Homeodomain-like"/>
    <property type="match status" value="1"/>
</dbReference>
<dbReference type="Gene3D" id="3.30.420.10">
    <property type="entry name" value="Ribonuclease H-like superfamily/Ribonuclease H"/>
    <property type="match status" value="1"/>
</dbReference>
<dbReference type="InterPro" id="IPR001584">
    <property type="entry name" value="Integrase_cat-core"/>
</dbReference>
<dbReference type="InterPro" id="IPR025246">
    <property type="entry name" value="IS30-like_HTH"/>
</dbReference>
<dbReference type="InterPro" id="IPR012337">
    <property type="entry name" value="RNaseH-like_sf"/>
</dbReference>
<dbReference type="InterPro" id="IPR036397">
    <property type="entry name" value="RNaseH_sf"/>
</dbReference>
<dbReference type="InterPro" id="IPR051917">
    <property type="entry name" value="Transposase-Integrase"/>
</dbReference>
<dbReference type="InterPro" id="IPR053392">
    <property type="entry name" value="Transposase_IS30-like"/>
</dbReference>
<dbReference type="InterPro" id="IPR001598">
    <property type="entry name" value="Transposase_IS30_CS"/>
</dbReference>
<dbReference type="NCBIfam" id="NF033563">
    <property type="entry name" value="transpos_IS30"/>
    <property type="match status" value="1"/>
</dbReference>
<dbReference type="PANTHER" id="PTHR10948">
    <property type="entry name" value="TRANSPOSASE"/>
    <property type="match status" value="1"/>
</dbReference>
<dbReference type="PANTHER" id="PTHR10948:SF23">
    <property type="entry name" value="TRANSPOSASE INSI FOR INSERTION SEQUENCE ELEMENT IS30A-RELATED"/>
    <property type="match status" value="1"/>
</dbReference>
<dbReference type="Pfam" id="PF13936">
    <property type="entry name" value="HTH_38"/>
    <property type="match status" value="1"/>
</dbReference>
<dbReference type="Pfam" id="PF00665">
    <property type="entry name" value="rve"/>
    <property type="match status" value="1"/>
</dbReference>
<dbReference type="SUPFAM" id="SSF53098">
    <property type="entry name" value="Ribonuclease H-like"/>
    <property type="match status" value="1"/>
</dbReference>
<dbReference type="PROSITE" id="PS50994">
    <property type="entry name" value="INTEGRASE"/>
    <property type="match status" value="1"/>
</dbReference>
<dbReference type="PROSITE" id="PS01043">
    <property type="entry name" value="TRANSPOSASE_IS30"/>
    <property type="match status" value="1"/>
</dbReference>
<evidence type="ECO:0000255" key="1">
    <source>
        <dbReference type="PROSITE-ProRule" id="PRU00457"/>
    </source>
</evidence>
<evidence type="ECO:0000305" key="2"/>